<dbReference type="EC" id="2.7.11.1"/>
<dbReference type="EMBL" id="AAFI02000177">
    <property type="protein sequence ID" value="EAL61742.2"/>
    <property type="molecule type" value="Genomic_DNA"/>
</dbReference>
<dbReference type="RefSeq" id="XP_635271.2">
    <property type="nucleotide sequence ID" value="XM_630179.2"/>
</dbReference>
<dbReference type="STRING" id="44689.Q54EG9"/>
<dbReference type="GlyGen" id="Q54EG9">
    <property type="glycosylation" value="8 sites"/>
</dbReference>
<dbReference type="PaxDb" id="44689-DDB0231196"/>
<dbReference type="EnsemblProtists" id="EAL61742">
    <property type="protein sequence ID" value="EAL61742"/>
    <property type="gene ID" value="DDB_G0291516"/>
</dbReference>
<dbReference type="GeneID" id="8628215"/>
<dbReference type="KEGG" id="ddi:DDB_G0291516"/>
<dbReference type="dictyBase" id="DDB_G0291516"/>
<dbReference type="VEuPathDB" id="AmoebaDB:DDB_G0291516"/>
<dbReference type="eggNOG" id="KOG4721">
    <property type="taxonomic scope" value="Eukaryota"/>
</dbReference>
<dbReference type="HOGENOM" id="CLU_306845_0_0_1"/>
<dbReference type="InParanoid" id="Q54EG9"/>
<dbReference type="PhylomeDB" id="Q54EG9"/>
<dbReference type="Reactome" id="R-DDI-5673000">
    <property type="pathway name" value="RAF activation"/>
</dbReference>
<dbReference type="Reactome" id="R-DDI-5675221">
    <property type="pathway name" value="Negative regulation of MAPK pathway"/>
</dbReference>
<dbReference type="PRO" id="PR:Q54EG9"/>
<dbReference type="Proteomes" id="UP000002195">
    <property type="component" value="Chromosome 6"/>
</dbReference>
<dbReference type="GO" id="GO:0005737">
    <property type="term" value="C:cytoplasm"/>
    <property type="evidence" value="ECO:0000318"/>
    <property type="project" value="GO_Central"/>
</dbReference>
<dbReference type="GO" id="GO:0016020">
    <property type="term" value="C:membrane"/>
    <property type="evidence" value="ECO:0007669"/>
    <property type="project" value="UniProtKB-SubCell"/>
</dbReference>
<dbReference type="GO" id="GO:0005524">
    <property type="term" value="F:ATP binding"/>
    <property type="evidence" value="ECO:0007669"/>
    <property type="project" value="UniProtKB-KW"/>
</dbReference>
<dbReference type="GO" id="GO:0004672">
    <property type="term" value="F:protein kinase activity"/>
    <property type="evidence" value="ECO:0000318"/>
    <property type="project" value="GO_Central"/>
</dbReference>
<dbReference type="GO" id="GO:0106310">
    <property type="term" value="F:protein serine kinase activity"/>
    <property type="evidence" value="ECO:0007669"/>
    <property type="project" value="RHEA"/>
</dbReference>
<dbReference type="GO" id="GO:0004674">
    <property type="term" value="F:protein serine/threonine kinase activity"/>
    <property type="evidence" value="ECO:0007669"/>
    <property type="project" value="UniProtKB-KW"/>
</dbReference>
<dbReference type="GO" id="GO:0007165">
    <property type="term" value="P:signal transduction"/>
    <property type="evidence" value="ECO:0000318"/>
    <property type="project" value="GO_Central"/>
</dbReference>
<dbReference type="CDD" id="cd00180">
    <property type="entry name" value="PKc"/>
    <property type="match status" value="1"/>
</dbReference>
<dbReference type="Gene3D" id="1.25.40.20">
    <property type="entry name" value="Ankyrin repeat-containing domain"/>
    <property type="match status" value="1"/>
</dbReference>
<dbReference type="Gene3D" id="1.10.510.10">
    <property type="entry name" value="Transferase(Phosphotransferase) domain 1"/>
    <property type="match status" value="1"/>
</dbReference>
<dbReference type="InterPro" id="IPR036770">
    <property type="entry name" value="Ankyrin_rpt-contain_sf"/>
</dbReference>
<dbReference type="InterPro" id="IPR011009">
    <property type="entry name" value="Kinase-like_dom_sf"/>
</dbReference>
<dbReference type="InterPro" id="IPR000719">
    <property type="entry name" value="Prot_kinase_dom"/>
</dbReference>
<dbReference type="InterPro" id="IPR008271">
    <property type="entry name" value="Ser/Thr_kinase_AS"/>
</dbReference>
<dbReference type="InterPro" id="IPR051681">
    <property type="entry name" value="Ser/Thr_Kinases-Pseudokinases"/>
</dbReference>
<dbReference type="PANTHER" id="PTHR44329:SF298">
    <property type="entry name" value="MIXED LINEAGE KINASE DOMAIN-LIKE PROTEIN"/>
    <property type="match status" value="1"/>
</dbReference>
<dbReference type="PANTHER" id="PTHR44329">
    <property type="entry name" value="SERINE/THREONINE-PROTEIN KINASE TNNI3K-RELATED"/>
    <property type="match status" value="1"/>
</dbReference>
<dbReference type="Pfam" id="PF00069">
    <property type="entry name" value="Pkinase"/>
    <property type="match status" value="1"/>
</dbReference>
<dbReference type="SUPFAM" id="SSF48403">
    <property type="entry name" value="Ankyrin repeat"/>
    <property type="match status" value="1"/>
</dbReference>
<dbReference type="SUPFAM" id="SSF56112">
    <property type="entry name" value="Protein kinase-like (PK-like)"/>
    <property type="match status" value="1"/>
</dbReference>
<dbReference type="PROSITE" id="PS50011">
    <property type="entry name" value="PROTEIN_KINASE_DOM"/>
    <property type="match status" value="1"/>
</dbReference>
<dbReference type="PROSITE" id="PS00108">
    <property type="entry name" value="PROTEIN_KINASE_ST"/>
    <property type="match status" value="1"/>
</dbReference>
<comment type="catalytic activity">
    <reaction>
        <text>L-seryl-[protein] + ATP = O-phospho-L-seryl-[protein] + ADP + H(+)</text>
        <dbReference type="Rhea" id="RHEA:17989"/>
        <dbReference type="Rhea" id="RHEA-COMP:9863"/>
        <dbReference type="Rhea" id="RHEA-COMP:11604"/>
        <dbReference type="ChEBI" id="CHEBI:15378"/>
        <dbReference type="ChEBI" id="CHEBI:29999"/>
        <dbReference type="ChEBI" id="CHEBI:30616"/>
        <dbReference type="ChEBI" id="CHEBI:83421"/>
        <dbReference type="ChEBI" id="CHEBI:456216"/>
        <dbReference type="EC" id="2.7.11.1"/>
    </reaction>
</comment>
<comment type="catalytic activity">
    <reaction>
        <text>L-threonyl-[protein] + ATP = O-phospho-L-threonyl-[protein] + ADP + H(+)</text>
        <dbReference type="Rhea" id="RHEA:46608"/>
        <dbReference type="Rhea" id="RHEA-COMP:11060"/>
        <dbReference type="Rhea" id="RHEA-COMP:11605"/>
        <dbReference type="ChEBI" id="CHEBI:15378"/>
        <dbReference type="ChEBI" id="CHEBI:30013"/>
        <dbReference type="ChEBI" id="CHEBI:30616"/>
        <dbReference type="ChEBI" id="CHEBI:61977"/>
        <dbReference type="ChEBI" id="CHEBI:456216"/>
        <dbReference type="EC" id="2.7.11.1"/>
    </reaction>
</comment>
<comment type="subcellular location">
    <subcellularLocation>
        <location evidence="5">Membrane</location>
        <topology evidence="5">Single-pass membrane protein</topology>
    </subcellularLocation>
</comment>
<comment type="similarity">
    <text evidence="2">Belongs to the protein kinase superfamily. Ser/Thr protein kinase family.</text>
</comment>
<sequence>MDFKENSIYINVMDKIYAREKEVLSQNQDFQENNLSRISLILNYEDFSLKFDESLHGYSFGYVTNPFGLKLHSPFTETVRFDGAEKYIYMKRILGVPSNETQLCNYQHQNFEEKDSQKELLPSPQQLTPPTSLPSLPLLPLPQAPEQNEEQQLTQPPSPPSIPPPPPQKKQIQIFITPSGIVSQKIQNFFRDTQIKSTDPVNCSLDHSIKKNYSLEEIYENNKNYMDKNNNFLHFLFTFIDKITIKDLDHFEKEINRVHNIKKLINQQNMKGETPLHSLIINNSESCLKKLVIAKINHMGIFDYSKCDNLNKNLLAHAIEKGDIDVIRLVLIGGCPLKMSPRSKLFKKNFKIYRQQIYRVFEIKEFLTKIGFNQYIPMFLEFEFKNININYLIESFKFKLNINEDEILLWKLLTEPYKNLDFKSFCSEYQIKHQNDLISETMANHFINVCQLNPHFGYIDFHTQIGSAGNASVFEGTYKGIPIACKEMPVSGTYEQSVDSIKEIAAVGQIKKLGCATVVETIGVLKYNQKLFLVMVKEKCNLLSFLCNKSEILKMQREGIWTSIFKISKDILKGLVSLREAGMYHRDFKTANFLVSNTGKILISDFGTSRDENEKRLNTFAKTIGTMWYRCPRLGDCSEDEKTLTHYNEKSEIYSLGIILWELVCVAMTGTYISPKIPLFQNEVDFLIWIHKDYRFSFPVGTPQSFVKLITRMCLPFRDRRPTVRQVLDNVKAIKKEFLSNRGIEGEQTYSGLECWREFNFSKQNVTRISISNLHNTEYKVVNKYDYASYNNKNSLLMKRYLDNSNFVVELINPNGLFRFKSFFEKEKLLYLKLKSTYKDEYYFDMSQFLTTIIQIHQITVIYYKMLQKYRELRLLRNNNNINKNKNNNNNNNNNNNNNNNINNNNTFNNSTNNNSNDNINIPYDFNNNNNNNNNSCNNSKKFKSISESTSALGLEASSSSSSSS</sequence>
<proteinExistence type="inferred from homology"/>
<accession>Q54EG9</accession>
<evidence type="ECO:0000255" key="1"/>
<evidence type="ECO:0000255" key="2">
    <source>
        <dbReference type="PROSITE-ProRule" id="PRU00159"/>
    </source>
</evidence>
<evidence type="ECO:0000255" key="3">
    <source>
        <dbReference type="PROSITE-ProRule" id="PRU10027"/>
    </source>
</evidence>
<evidence type="ECO:0000256" key="4">
    <source>
        <dbReference type="SAM" id="MobiDB-lite"/>
    </source>
</evidence>
<evidence type="ECO:0000305" key="5"/>
<name>Y1516_DICDI</name>
<protein>
    <recommendedName>
        <fullName>Probable serine/threonine-protein kinase DDB_G0291516</fullName>
        <ecNumber>2.7.11.1</ecNumber>
    </recommendedName>
</protein>
<gene>
    <name type="ORF">DDB_G0291516</name>
</gene>
<organism>
    <name type="scientific">Dictyostelium discoideum</name>
    <name type="common">Social amoeba</name>
    <dbReference type="NCBI Taxonomy" id="44689"/>
    <lineage>
        <taxon>Eukaryota</taxon>
        <taxon>Amoebozoa</taxon>
        <taxon>Evosea</taxon>
        <taxon>Eumycetozoa</taxon>
        <taxon>Dictyostelia</taxon>
        <taxon>Dictyosteliales</taxon>
        <taxon>Dictyosteliaceae</taxon>
        <taxon>Dictyostelium</taxon>
    </lineage>
</organism>
<feature type="chain" id="PRO_0000362043" description="Probable serine/threonine-protein kinase DDB_G0291516">
    <location>
        <begin position="1"/>
        <end position="965"/>
    </location>
</feature>
<feature type="transmembrane region" description="Helical" evidence="1">
    <location>
        <begin position="653"/>
        <end position="673"/>
    </location>
</feature>
<feature type="repeat" description="ANK 1">
    <location>
        <begin position="271"/>
        <end position="301"/>
    </location>
</feature>
<feature type="repeat" description="ANK 2">
    <location>
        <begin position="310"/>
        <end position="339"/>
    </location>
</feature>
<feature type="domain" description="Protein kinase" evidence="2">
    <location>
        <begin position="459"/>
        <end position="739"/>
    </location>
</feature>
<feature type="region of interest" description="Disordered" evidence="4">
    <location>
        <begin position="114"/>
        <end position="170"/>
    </location>
</feature>
<feature type="region of interest" description="Disordered" evidence="4">
    <location>
        <begin position="881"/>
        <end position="942"/>
    </location>
</feature>
<feature type="compositionally biased region" description="Low complexity" evidence="4">
    <location>
        <begin position="119"/>
        <end position="136"/>
    </location>
</feature>
<feature type="compositionally biased region" description="Low complexity" evidence="4">
    <location>
        <begin position="144"/>
        <end position="155"/>
    </location>
</feature>
<feature type="compositionally biased region" description="Pro residues" evidence="4">
    <location>
        <begin position="156"/>
        <end position="168"/>
    </location>
</feature>
<feature type="compositionally biased region" description="Low complexity" evidence="4">
    <location>
        <begin position="881"/>
        <end position="940"/>
    </location>
</feature>
<feature type="active site" description="Proton acceptor" evidence="2 3">
    <location>
        <position position="587"/>
    </location>
</feature>
<feature type="binding site" evidence="2">
    <location>
        <begin position="465"/>
        <end position="473"/>
    </location>
    <ligand>
        <name>ATP</name>
        <dbReference type="ChEBI" id="CHEBI:30616"/>
    </ligand>
</feature>
<feature type="binding site" evidence="2">
    <location>
        <position position="486"/>
    </location>
    <ligand>
        <name>ATP</name>
        <dbReference type="ChEBI" id="CHEBI:30616"/>
    </ligand>
</feature>
<feature type="glycosylation site" description="N-linked (GlcNAc...) asparagine" evidence="1">
    <location>
        <position position="760"/>
    </location>
</feature>
<feature type="glycosylation site" description="N-linked (GlcNAc...) asparagine" evidence="1">
    <location>
        <position position="765"/>
    </location>
</feature>
<feature type="glycosylation site" description="N-linked (GlcNAc...) asparagine" evidence="1">
    <location>
        <position position="905"/>
    </location>
</feature>
<feature type="glycosylation site" description="N-linked (GlcNAc...) asparagine" evidence="1">
    <location>
        <position position="909"/>
    </location>
</feature>
<feature type="glycosylation site" description="N-linked (GlcNAc...) asparagine" evidence="1">
    <location>
        <position position="910"/>
    </location>
</feature>
<feature type="glycosylation site" description="N-linked (GlcNAc...) asparagine" evidence="1">
    <location>
        <position position="914"/>
    </location>
</feature>
<feature type="glycosylation site" description="N-linked (GlcNAc...) asparagine" evidence="1">
    <location>
        <position position="934"/>
    </location>
</feature>
<feature type="glycosylation site" description="N-linked (GlcNAc...) asparagine" evidence="1">
    <location>
        <position position="938"/>
    </location>
</feature>
<keyword id="KW-0040">ANK repeat</keyword>
<keyword id="KW-0067">ATP-binding</keyword>
<keyword id="KW-0325">Glycoprotein</keyword>
<keyword id="KW-0418">Kinase</keyword>
<keyword id="KW-0472">Membrane</keyword>
<keyword id="KW-0547">Nucleotide-binding</keyword>
<keyword id="KW-1185">Reference proteome</keyword>
<keyword id="KW-0677">Repeat</keyword>
<keyword id="KW-0723">Serine/threonine-protein kinase</keyword>
<keyword id="KW-0808">Transferase</keyword>
<keyword id="KW-0812">Transmembrane</keyword>
<keyword id="KW-1133">Transmembrane helix</keyword>
<reference key="1">
    <citation type="journal article" date="2005" name="Nature">
        <title>The genome of the social amoeba Dictyostelium discoideum.</title>
        <authorList>
            <person name="Eichinger L."/>
            <person name="Pachebat J.A."/>
            <person name="Gloeckner G."/>
            <person name="Rajandream M.A."/>
            <person name="Sucgang R."/>
            <person name="Berriman M."/>
            <person name="Song J."/>
            <person name="Olsen R."/>
            <person name="Szafranski K."/>
            <person name="Xu Q."/>
            <person name="Tunggal B."/>
            <person name="Kummerfeld S."/>
            <person name="Madera M."/>
            <person name="Konfortov B.A."/>
            <person name="Rivero F."/>
            <person name="Bankier A.T."/>
            <person name="Lehmann R."/>
            <person name="Hamlin N."/>
            <person name="Davies R."/>
            <person name="Gaudet P."/>
            <person name="Fey P."/>
            <person name="Pilcher K."/>
            <person name="Chen G."/>
            <person name="Saunders D."/>
            <person name="Sodergren E.J."/>
            <person name="Davis P."/>
            <person name="Kerhornou A."/>
            <person name="Nie X."/>
            <person name="Hall N."/>
            <person name="Anjard C."/>
            <person name="Hemphill L."/>
            <person name="Bason N."/>
            <person name="Farbrother P."/>
            <person name="Desany B."/>
            <person name="Just E."/>
            <person name="Morio T."/>
            <person name="Rost R."/>
            <person name="Churcher C.M."/>
            <person name="Cooper J."/>
            <person name="Haydock S."/>
            <person name="van Driessche N."/>
            <person name="Cronin A."/>
            <person name="Goodhead I."/>
            <person name="Muzny D.M."/>
            <person name="Mourier T."/>
            <person name="Pain A."/>
            <person name="Lu M."/>
            <person name="Harper D."/>
            <person name="Lindsay R."/>
            <person name="Hauser H."/>
            <person name="James K.D."/>
            <person name="Quiles M."/>
            <person name="Madan Babu M."/>
            <person name="Saito T."/>
            <person name="Buchrieser C."/>
            <person name="Wardroper A."/>
            <person name="Felder M."/>
            <person name="Thangavelu M."/>
            <person name="Johnson D."/>
            <person name="Knights A."/>
            <person name="Loulseged H."/>
            <person name="Mungall K.L."/>
            <person name="Oliver K."/>
            <person name="Price C."/>
            <person name="Quail M.A."/>
            <person name="Urushihara H."/>
            <person name="Hernandez J."/>
            <person name="Rabbinowitsch E."/>
            <person name="Steffen D."/>
            <person name="Sanders M."/>
            <person name="Ma J."/>
            <person name="Kohara Y."/>
            <person name="Sharp S."/>
            <person name="Simmonds M.N."/>
            <person name="Spiegler S."/>
            <person name="Tivey A."/>
            <person name="Sugano S."/>
            <person name="White B."/>
            <person name="Walker D."/>
            <person name="Woodward J.R."/>
            <person name="Winckler T."/>
            <person name="Tanaka Y."/>
            <person name="Shaulsky G."/>
            <person name="Schleicher M."/>
            <person name="Weinstock G.M."/>
            <person name="Rosenthal A."/>
            <person name="Cox E.C."/>
            <person name="Chisholm R.L."/>
            <person name="Gibbs R.A."/>
            <person name="Loomis W.F."/>
            <person name="Platzer M."/>
            <person name="Kay R.R."/>
            <person name="Williams J.G."/>
            <person name="Dear P.H."/>
            <person name="Noegel A.A."/>
            <person name="Barrell B.G."/>
            <person name="Kuspa A."/>
        </authorList>
    </citation>
    <scope>NUCLEOTIDE SEQUENCE [LARGE SCALE GENOMIC DNA]</scope>
    <source>
        <strain>AX4</strain>
    </source>
</reference>